<proteinExistence type="inferred from homology"/>
<feature type="chain" id="PRO_1000047173" description="2,3,4,5-tetrahydropyridine-2,6-dicarboxylate N-succinyltransferase">
    <location>
        <begin position="1"/>
        <end position="283"/>
    </location>
</feature>
<feature type="binding site" evidence="1">
    <location>
        <position position="107"/>
    </location>
    <ligand>
        <name>substrate</name>
    </ligand>
</feature>
<feature type="binding site" evidence="1">
    <location>
        <position position="144"/>
    </location>
    <ligand>
        <name>substrate</name>
    </ligand>
</feature>
<protein>
    <recommendedName>
        <fullName evidence="1">2,3,4,5-tetrahydropyridine-2,6-dicarboxylate N-succinyltransferase</fullName>
        <ecNumber evidence="1">2.3.1.117</ecNumber>
    </recommendedName>
    <alternativeName>
        <fullName evidence="1">Tetrahydrodipicolinate N-succinyltransferase</fullName>
        <shortName evidence="1">THDP succinyltransferase</shortName>
        <shortName evidence="1">THP succinyltransferase</shortName>
        <shortName evidence="1">Tetrahydropicolinate succinylase</shortName>
    </alternativeName>
</protein>
<evidence type="ECO:0000255" key="1">
    <source>
        <dbReference type="HAMAP-Rule" id="MF_00811"/>
    </source>
</evidence>
<sequence>MTTPSLQTTIEAAWESREGVTLETRGAVRDAVEAVLDGLDAGIYRVAEKIGETWVVHQWLKMAVLLSFRLNDMTPVSGAPGGATWWDKVPSKFAGWGEDRFRAAGFRAVPGAIVRRSAHIAPGVVLMPSFVNLGARVESGAMIDTWATVGSCAQIGRNVHLSGGAGIGGVLEPLQAGPVIIEDNCFIGARSEVAEGVLVETGAVLSMGVFIGASTRVIDRETGEVFMGRVPAYSVVVPGSLPGKPLPDGTPGPGLACAVIVKRVDERTRSKVSINDLLRDTPR</sequence>
<reference key="1">
    <citation type="journal article" date="2011" name="Stand. Genomic Sci.">
        <title>Complete genome sequence of Rhodospirillum rubrum type strain (S1).</title>
        <authorList>
            <person name="Munk A.C."/>
            <person name="Copeland A."/>
            <person name="Lucas S."/>
            <person name="Lapidus A."/>
            <person name="Del Rio T.G."/>
            <person name="Barry K."/>
            <person name="Detter J.C."/>
            <person name="Hammon N."/>
            <person name="Israni S."/>
            <person name="Pitluck S."/>
            <person name="Brettin T."/>
            <person name="Bruce D."/>
            <person name="Han C."/>
            <person name="Tapia R."/>
            <person name="Gilna P."/>
            <person name="Schmutz J."/>
            <person name="Larimer F."/>
            <person name="Land M."/>
            <person name="Kyrpides N.C."/>
            <person name="Mavromatis K."/>
            <person name="Richardson P."/>
            <person name="Rohde M."/>
            <person name="Goeker M."/>
            <person name="Klenk H.P."/>
            <person name="Zhang Y."/>
            <person name="Roberts G.P."/>
            <person name="Reslewic S."/>
            <person name="Schwartz D.C."/>
        </authorList>
    </citation>
    <scope>NUCLEOTIDE SEQUENCE [LARGE SCALE GENOMIC DNA]</scope>
    <source>
        <strain>ATCC 11170 / ATH 1.1.1 / DSM 467 / LMG 4362 / NCIMB 8255 / S1</strain>
    </source>
</reference>
<gene>
    <name evidence="1" type="primary">dapD</name>
    <name type="ordered locus">Rru_A3479</name>
</gene>
<dbReference type="EC" id="2.3.1.117" evidence="1"/>
<dbReference type="EMBL" id="CP000230">
    <property type="protein sequence ID" value="ABC24273.1"/>
    <property type="molecule type" value="Genomic_DNA"/>
</dbReference>
<dbReference type="RefSeq" id="WP_011391226.1">
    <property type="nucleotide sequence ID" value="NC_007643.1"/>
</dbReference>
<dbReference type="RefSeq" id="YP_428560.1">
    <property type="nucleotide sequence ID" value="NC_007643.1"/>
</dbReference>
<dbReference type="SMR" id="Q2RNM2"/>
<dbReference type="STRING" id="269796.Rru_A3479"/>
<dbReference type="EnsemblBacteria" id="ABC24273">
    <property type="protein sequence ID" value="ABC24273"/>
    <property type="gene ID" value="Rru_A3479"/>
</dbReference>
<dbReference type="KEGG" id="rru:Rru_A3479"/>
<dbReference type="PATRIC" id="fig|269796.9.peg.3595"/>
<dbReference type="eggNOG" id="COG2171">
    <property type="taxonomic scope" value="Bacteria"/>
</dbReference>
<dbReference type="HOGENOM" id="CLU_050859_0_1_5"/>
<dbReference type="PhylomeDB" id="Q2RNM2"/>
<dbReference type="UniPathway" id="UPA00034">
    <property type="reaction ID" value="UER00019"/>
</dbReference>
<dbReference type="Proteomes" id="UP000001929">
    <property type="component" value="Chromosome"/>
</dbReference>
<dbReference type="GO" id="GO:0005737">
    <property type="term" value="C:cytoplasm"/>
    <property type="evidence" value="ECO:0007669"/>
    <property type="project" value="UniProtKB-SubCell"/>
</dbReference>
<dbReference type="GO" id="GO:0008666">
    <property type="term" value="F:2,3,4,5-tetrahydropyridine-2,6-dicarboxylate N-succinyltransferase activity"/>
    <property type="evidence" value="ECO:0007669"/>
    <property type="project" value="UniProtKB-UniRule"/>
</dbReference>
<dbReference type="GO" id="GO:0016779">
    <property type="term" value="F:nucleotidyltransferase activity"/>
    <property type="evidence" value="ECO:0007669"/>
    <property type="project" value="TreeGrafter"/>
</dbReference>
<dbReference type="GO" id="GO:0019877">
    <property type="term" value="P:diaminopimelate biosynthetic process"/>
    <property type="evidence" value="ECO:0007669"/>
    <property type="project" value="UniProtKB-UniRule"/>
</dbReference>
<dbReference type="GO" id="GO:0009089">
    <property type="term" value="P:lysine biosynthetic process via diaminopimelate"/>
    <property type="evidence" value="ECO:0007669"/>
    <property type="project" value="UniProtKB-UniRule"/>
</dbReference>
<dbReference type="CDD" id="cd03350">
    <property type="entry name" value="LbH_THP_succinylT"/>
    <property type="match status" value="1"/>
</dbReference>
<dbReference type="Gene3D" id="2.160.10.10">
    <property type="entry name" value="Hexapeptide repeat proteins"/>
    <property type="match status" value="1"/>
</dbReference>
<dbReference type="Gene3D" id="1.10.166.10">
    <property type="entry name" value="Tetrahydrodipicolinate-N-succinyltransferase, N-terminal domain"/>
    <property type="match status" value="1"/>
</dbReference>
<dbReference type="HAMAP" id="MF_00811">
    <property type="entry name" value="DapD"/>
    <property type="match status" value="1"/>
</dbReference>
<dbReference type="InterPro" id="IPR005664">
    <property type="entry name" value="DapD_Trfase_Hexpep_rpt_fam"/>
</dbReference>
<dbReference type="InterPro" id="IPR001451">
    <property type="entry name" value="Hexapep"/>
</dbReference>
<dbReference type="InterPro" id="IPR023180">
    <property type="entry name" value="THP_succinylTrfase_dom1"/>
</dbReference>
<dbReference type="InterPro" id="IPR037133">
    <property type="entry name" value="THP_succinylTrfase_N_sf"/>
</dbReference>
<dbReference type="InterPro" id="IPR011004">
    <property type="entry name" value="Trimer_LpxA-like_sf"/>
</dbReference>
<dbReference type="NCBIfam" id="TIGR00965">
    <property type="entry name" value="dapD"/>
    <property type="match status" value="1"/>
</dbReference>
<dbReference type="NCBIfam" id="NF008808">
    <property type="entry name" value="PRK11830.1"/>
    <property type="match status" value="1"/>
</dbReference>
<dbReference type="PANTHER" id="PTHR19136:SF52">
    <property type="entry name" value="2,3,4,5-TETRAHYDROPYRIDINE-2,6-DICARBOXYLATE N-SUCCINYLTRANSFERASE"/>
    <property type="match status" value="1"/>
</dbReference>
<dbReference type="PANTHER" id="PTHR19136">
    <property type="entry name" value="MOLYBDENUM COFACTOR GUANYLYLTRANSFERASE"/>
    <property type="match status" value="1"/>
</dbReference>
<dbReference type="Pfam" id="PF14602">
    <property type="entry name" value="Hexapep_2"/>
    <property type="match status" value="1"/>
</dbReference>
<dbReference type="Pfam" id="PF14805">
    <property type="entry name" value="THDPS_N_2"/>
    <property type="match status" value="1"/>
</dbReference>
<dbReference type="SUPFAM" id="SSF51161">
    <property type="entry name" value="Trimeric LpxA-like enzymes"/>
    <property type="match status" value="1"/>
</dbReference>
<comment type="catalytic activity">
    <reaction evidence="1">
        <text>(S)-2,3,4,5-tetrahydrodipicolinate + succinyl-CoA + H2O = (S)-2-succinylamino-6-oxoheptanedioate + CoA</text>
        <dbReference type="Rhea" id="RHEA:17325"/>
        <dbReference type="ChEBI" id="CHEBI:15377"/>
        <dbReference type="ChEBI" id="CHEBI:15685"/>
        <dbReference type="ChEBI" id="CHEBI:16845"/>
        <dbReference type="ChEBI" id="CHEBI:57287"/>
        <dbReference type="ChEBI" id="CHEBI:57292"/>
        <dbReference type="EC" id="2.3.1.117"/>
    </reaction>
</comment>
<comment type="pathway">
    <text evidence="1">Amino-acid biosynthesis; L-lysine biosynthesis via DAP pathway; LL-2,6-diaminopimelate from (S)-tetrahydrodipicolinate (succinylase route): step 1/3.</text>
</comment>
<comment type="subunit">
    <text evidence="1">Homotrimer.</text>
</comment>
<comment type="subcellular location">
    <subcellularLocation>
        <location evidence="1">Cytoplasm</location>
    </subcellularLocation>
</comment>
<comment type="similarity">
    <text evidence="1">Belongs to the transferase hexapeptide repeat family.</text>
</comment>
<keyword id="KW-0012">Acyltransferase</keyword>
<keyword id="KW-0028">Amino-acid biosynthesis</keyword>
<keyword id="KW-0963">Cytoplasm</keyword>
<keyword id="KW-0220">Diaminopimelate biosynthesis</keyword>
<keyword id="KW-0457">Lysine biosynthesis</keyword>
<keyword id="KW-1185">Reference proteome</keyword>
<keyword id="KW-0677">Repeat</keyword>
<keyword id="KW-0808">Transferase</keyword>
<accession>Q2RNM2</accession>
<name>DAPD_RHORT</name>
<organism>
    <name type="scientific">Rhodospirillum rubrum (strain ATCC 11170 / ATH 1.1.1 / DSM 467 / LMG 4362 / NCIMB 8255 / S1)</name>
    <dbReference type="NCBI Taxonomy" id="269796"/>
    <lineage>
        <taxon>Bacteria</taxon>
        <taxon>Pseudomonadati</taxon>
        <taxon>Pseudomonadota</taxon>
        <taxon>Alphaproteobacteria</taxon>
        <taxon>Rhodospirillales</taxon>
        <taxon>Rhodospirillaceae</taxon>
        <taxon>Rhodospirillum</taxon>
    </lineage>
</organism>